<name>LPXB_ESCF3</name>
<sequence>MTEQRPLTIALVAGETSGDILGAGLIRALKERVPNARFVGVAGPRMQAEGCEAWYEMEELAVMGIVEVLGRLRRLLHIRADLTKRFGELKPDVFVGIDAPDFNITLEGNLKKQGIKTIHYVSPSVWAWRQKRVFKIGRATDLVLAFLPFEKAFYDKYNVPCRFIGHTMADAMPLDPDKNAARDVLGIPHDAHCLALLPGSRGAEVEMLSADFLKTAQLLRQTYPDLEIVVPLVNAKRREQFERIKAEVAPDLSVHLLDGMGREAMVASDAALLASGTAALECMLAKCPMVVGYRMKPFTFWLAKRLVKTEYVSLPNLLAGRELVKELLQEECEPQKLAAALLPLLANGKTSHAMHDTFRELHQQIRCNADEQAAQAVLELAQ</sequence>
<gene>
    <name evidence="1" type="primary">lpxB</name>
    <name type="ordered locus">EFER_0205</name>
</gene>
<evidence type="ECO:0000255" key="1">
    <source>
        <dbReference type="HAMAP-Rule" id="MF_00392"/>
    </source>
</evidence>
<accession>B7LW61</accession>
<protein>
    <recommendedName>
        <fullName evidence="1">Lipid-A-disaccharide synthase</fullName>
        <ecNumber evidence="1">2.4.1.182</ecNumber>
    </recommendedName>
</protein>
<proteinExistence type="inferred from homology"/>
<keyword id="KW-0328">Glycosyltransferase</keyword>
<keyword id="KW-0441">Lipid A biosynthesis</keyword>
<keyword id="KW-0444">Lipid biosynthesis</keyword>
<keyword id="KW-0443">Lipid metabolism</keyword>
<keyword id="KW-0808">Transferase</keyword>
<organism>
    <name type="scientific">Escherichia fergusonii (strain ATCC 35469 / DSM 13698 / CCUG 18766 / IAM 14443 / JCM 21226 / LMG 7866 / NBRC 102419 / NCTC 12128 / CDC 0568-73)</name>
    <dbReference type="NCBI Taxonomy" id="585054"/>
    <lineage>
        <taxon>Bacteria</taxon>
        <taxon>Pseudomonadati</taxon>
        <taxon>Pseudomonadota</taxon>
        <taxon>Gammaproteobacteria</taxon>
        <taxon>Enterobacterales</taxon>
        <taxon>Enterobacteriaceae</taxon>
        <taxon>Escherichia</taxon>
    </lineage>
</organism>
<dbReference type="EC" id="2.4.1.182" evidence="1"/>
<dbReference type="EMBL" id="CU928158">
    <property type="protein sequence ID" value="CAQ87785.1"/>
    <property type="molecule type" value="Genomic_DNA"/>
</dbReference>
<dbReference type="RefSeq" id="WP_000139668.1">
    <property type="nucleotide sequence ID" value="NC_011740.1"/>
</dbReference>
<dbReference type="SMR" id="B7LW61"/>
<dbReference type="CAZy" id="GT19">
    <property type="family name" value="Glycosyltransferase Family 19"/>
</dbReference>
<dbReference type="GeneID" id="75058711"/>
<dbReference type="KEGG" id="efe:EFER_0205"/>
<dbReference type="HOGENOM" id="CLU_036577_3_0_6"/>
<dbReference type="OrthoDB" id="9801642at2"/>
<dbReference type="UniPathway" id="UPA00359">
    <property type="reaction ID" value="UER00481"/>
</dbReference>
<dbReference type="Proteomes" id="UP000000745">
    <property type="component" value="Chromosome"/>
</dbReference>
<dbReference type="GO" id="GO:0016020">
    <property type="term" value="C:membrane"/>
    <property type="evidence" value="ECO:0007669"/>
    <property type="project" value="GOC"/>
</dbReference>
<dbReference type="GO" id="GO:0008915">
    <property type="term" value="F:lipid-A-disaccharide synthase activity"/>
    <property type="evidence" value="ECO:0007669"/>
    <property type="project" value="UniProtKB-UniRule"/>
</dbReference>
<dbReference type="GO" id="GO:0005543">
    <property type="term" value="F:phospholipid binding"/>
    <property type="evidence" value="ECO:0007669"/>
    <property type="project" value="TreeGrafter"/>
</dbReference>
<dbReference type="GO" id="GO:0009245">
    <property type="term" value="P:lipid A biosynthetic process"/>
    <property type="evidence" value="ECO:0007669"/>
    <property type="project" value="UniProtKB-UniRule"/>
</dbReference>
<dbReference type="CDD" id="cd01635">
    <property type="entry name" value="Glycosyltransferase_GTB-type"/>
    <property type="match status" value="1"/>
</dbReference>
<dbReference type="HAMAP" id="MF_00392">
    <property type="entry name" value="LpxB"/>
    <property type="match status" value="1"/>
</dbReference>
<dbReference type="InterPro" id="IPR003835">
    <property type="entry name" value="Glyco_trans_19"/>
</dbReference>
<dbReference type="NCBIfam" id="TIGR00215">
    <property type="entry name" value="lpxB"/>
    <property type="match status" value="1"/>
</dbReference>
<dbReference type="PANTHER" id="PTHR30372">
    <property type="entry name" value="LIPID-A-DISACCHARIDE SYNTHASE"/>
    <property type="match status" value="1"/>
</dbReference>
<dbReference type="PANTHER" id="PTHR30372:SF4">
    <property type="entry name" value="LIPID-A-DISACCHARIDE SYNTHASE, MITOCHONDRIAL-RELATED"/>
    <property type="match status" value="1"/>
</dbReference>
<dbReference type="Pfam" id="PF02684">
    <property type="entry name" value="LpxB"/>
    <property type="match status" value="1"/>
</dbReference>
<dbReference type="SUPFAM" id="SSF53756">
    <property type="entry name" value="UDP-Glycosyltransferase/glycogen phosphorylase"/>
    <property type="match status" value="1"/>
</dbReference>
<feature type="chain" id="PRO_1000191485" description="Lipid-A-disaccharide synthase">
    <location>
        <begin position="1"/>
        <end position="382"/>
    </location>
</feature>
<reference key="1">
    <citation type="journal article" date="2009" name="PLoS Genet.">
        <title>Organised genome dynamics in the Escherichia coli species results in highly diverse adaptive paths.</title>
        <authorList>
            <person name="Touchon M."/>
            <person name="Hoede C."/>
            <person name="Tenaillon O."/>
            <person name="Barbe V."/>
            <person name="Baeriswyl S."/>
            <person name="Bidet P."/>
            <person name="Bingen E."/>
            <person name="Bonacorsi S."/>
            <person name="Bouchier C."/>
            <person name="Bouvet O."/>
            <person name="Calteau A."/>
            <person name="Chiapello H."/>
            <person name="Clermont O."/>
            <person name="Cruveiller S."/>
            <person name="Danchin A."/>
            <person name="Diard M."/>
            <person name="Dossat C."/>
            <person name="Karoui M.E."/>
            <person name="Frapy E."/>
            <person name="Garry L."/>
            <person name="Ghigo J.M."/>
            <person name="Gilles A.M."/>
            <person name="Johnson J."/>
            <person name="Le Bouguenec C."/>
            <person name="Lescat M."/>
            <person name="Mangenot S."/>
            <person name="Martinez-Jehanne V."/>
            <person name="Matic I."/>
            <person name="Nassif X."/>
            <person name="Oztas S."/>
            <person name="Petit M.A."/>
            <person name="Pichon C."/>
            <person name="Rouy Z."/>
            <person name="Ruf C.S."/>
            <person name="Schneider D."/>
            <person name="Tourret J."/>
            <person name="Vacherie B."/>
            <person name="Vallenet D."/>
            <person name="Medigue C."/>
            <person name="Rocha E.P.C."/>
            <person name="Denamur E."/>
        </authorList>
    </citation>
    <scope>NUCLEOTIDE SEQUENCE [LARGE SCALE GENOMIC DNA]</scope>
    <source>
        <strain>ATCC 35469 / DSM 13698 / BCRC 15582 / CCUG 18766 / IAM 14443 / JCM 21226 / LMG 7866 / NBRC 102419 / NCTC 12128 / CDC 0568-73</strain>
    </source>
</reference>
<comment type="function">
    <text evidence="1">Condensation of UDP-2,3-diacylglucosamine and 2,3-diacylglucosamine-1-phosphate to form lipid A disaccharide, a precursor of lipid A, a phosphorylated glycolipid that anchors the lipopolysaccharide to the outer membrane of the cell.</text>
</comment>
<comment type="catalytic activity">
    <reaction evidence="1">
        <text>2-N,3-O-bis[(3R)-3-hydroxytetradecanoyl]-alpha-D-glucosaminyl 1-phosphate + UDP-2-N,3-O-bis[(3R)-3-hydroxytetradecanoyl]-alpha-D-glucosamine = lipid A disaccharide (E. coli) + UDP + H(+)</text>
        <dbReference type="Rhea" id="RHEA:22668"/>
        <dbReference type="ChEBI" id="CHEBI:15378"/>
        <dbReference type="ChEBI" id="CHEBI:57957"/>
        <dbReference type="ChEBI" id="CHEBI:58223"/>
        <dbReference type="ChEBI" id="CHEBI:58466"/>
        <dbReference type="ChEBI" id="CHEBI:78847"/>
    </reaction>
</comment>
<comment type="catalytic activity">
    <reaction evidence="1">
        <text>a lipid X + a UDP-2-N,3-O-bis[(3R)-3-hydroxyacyl]-alpha-D-glucosamine = a lipid A disaccharide + UDP + H(+)</text>
        <dbReference type="Rhea" id="RHEA:67828"/>
        <dbReference type="ChEBI" id="CHEBI:15378"/>
        <dbReference type="ChEBI" id="CHEBI:58223"/>
        <dbReference type="ChEBI" id="CHEBI:137748"/>
        <dbReference type="ChEBI" id="CHEBI:176338"/>
        <dbReference type="ChEBI" id="CHEBI:176343"/>
        <dbReference type="EC" id="2.4.1.182"/>
    </reaction>
</comment>
<comment type="pathway">
    <text evidence="1">Glycolipid biosynthesis; lipid IV(A) biosynthesis; lipid IV(A) from (3R)-3-hydroxytetradecanoyl-[acyl-carrier-protein] and UDP-N-acetyl-alpha-D-glucosamine: step 5/6.</text>
</comment>
<comment type="similarity">
    <text evidence="1">Belongs to the LpxB family.</text>
</comment>